<evidence type="ECO:0000250" key="1">
    <source>
        <dbReference type="UniProtKB" id="P0AAZ4"/>
    </source>
</evidence>
<evidence type="ECO:0000255" key="2"/>
<evidence type="ECO:0000269" key="3">
    <source>
    </source>
</evidence>
<evidence type="ECO:0000269" key="4">
    <source>
    </source>
</evidence>
<evidence type="ECO:0000269" key="5">
    <source>
    </source>
</evidence>
<evidence type="ECO:0000269" key="6">
    <source>
    </source>
</evidence>
<evidence type="ECO:0000269" key="7">
    <source>
    </source>
</evidence>
<evidence type="ECO:0000303" key="8">
    <source>
    </source>
</evidence>
<evidence type="ECO:0000305" key="9"/>
<evidence type="ECO:0000305" key="10">
    <source>
    </source>
</evidence>
<evidence type="ECO:0000305" key="11">
    <source>
    </source>
</evidence>
<keyword id="KW-0067">ATP-binding</keyword>
<keyword id="KW-0963">Cytoplasm</keyword>
<keyword id="KW-0238">DNA-binding</keyword>
<keyword id="KW-0378">Hydrolase</keyword>
<keyword id="KW-0547">Nucleotide-binding</keyword>
<keyword id="KW-1185">Reference proteome</keyword>
<protein>
    <recommendedName>
        <fullName evidence="8">Replication-associated recombination protein A</fullName>
        <ecNumber evidence="4">3.6.4.-</ecNumber>
    </recommendedName>
</protein>
<comment type="function">
    <text evidence="4 5 6 7 11">Plays a role in recombination-dependent DNA replication (PubMed:29947798, PubMed:30760776, PubMed:30954900, PubMed:32117122). Positively affects the formation of RecA threads during response to DNA damage, directly or indirectly counteracting the negative RecA modulators RecX and RecU (PubMed:32117122). Stabilizes a RecA-ssDNA complex (PubMed:32117122). In vitro, in the presence of SsbA, inhibits PriA-dependent DNA replication restart of both leading and lagging strands; elongation is insensitive to RarA (PubMed:29947798). Plays a role in response to DNA damage, localizes to the replication fork but also to DNA elsewhere in the cell (PubMed:30760776). Probably required for repair of single-stranded nicks generated by H(2)O(2) (Probable) (PubMed:30954900). Epistatic to RecA, partially represses deletions of the error-prone translesion DNA polymerases (dinB1 and dinB2), genetically interacts with replicative helicase loaders dnaB and dnaD (PubMed:30954900). Epistatic to recF and recO mutations upon DNA damage (PubMed:32117122). A DNA-dependent ATPase stimulated by hairpin structures in circular single-stranded (ss)DNA or ssDNA-dsDNA junctions, by blunt end and 5'-tailed dsDNA and by single-stranded binding protein SsbA protein bound to ssDNA (PubMed:29947798). Preferentially binds ssDNA and replication-fork structures; SsbA stimulates binding to ssDNA. Addition of ATP to the protein has no visible effect in vitro (PubMed:29947798).</text>
</comment>
<comment type="activity regulation">
    <text evidence="4">ssDNA-dependent ATP hydrolysis is stimulated by single-stranded binding protein SsbA but not by SsbB; in the presence of SsbB, ssDNA secondary structure is removed and RarA's ATPase activity is decreased. The C-terminal 9 residues of SsbA are sufficient to stimulate ATPase activity.</text>
</comment>
<comment type="subunit">
    <text evidence="1 3 10">Homotetramer (Probable) (PubMed:29947798). Interacts with single-stranded binding protein SsbA (PubMed:21170359). May interact with PriA (PubMed:29947798).</text>
</comment>
<comment type="subcellular location">
    <subcellularLocation>
        <location evidence="3">Cytoplasm</location>
        <location evidence="3">Nucleoid</location>
    </subcellularLocation>
    <text evidence="3 5">Localizes in tight foci on the nucleoid; targeted to the nucleoid via the 6 C-terminal residues of SsbA (PubMed:21170359). Another study found about 15% of cells have foci, half colocalize with the replication machinery; the number of foci increases when cells are treated with H(2)O(2) or mitomycin C, or in the absence of recD2, recF, recO, recU or recX (PubMed:30760776). Foci can be static or mobile; following H(2)O(2) treatment there are more mobile foci (PubMed:30760776). Inactivation of helicase loader DnaB decreases RarA mobility (RarA remains at replication forks), while inactivation of replicative helicase DnaC increases RarA mobility (RarA is lost from replication forks) (PubMed:30760776).</text>
</comment>
<comment type="disruption phenotype">
    <text evidence="5 6 7">Full RecA induction does not occur in response to DNA damaging agents; RecA 'threads' do not form in response to H(2)O(2) treatment (PubMed:32117122). Increased sensitivity to DNA damaging agents H(2)O(2) and mitomycin C (PubMed:30760776, PubMed:30954900, PubMed:32117122). Double dnaB temperature-sensitive-rarA deletion strains die at 42 degrees Celsius (PubMed:30760776, PubMed:30954900). Double dnaC temperature-sensitive-rarA deletion strains are very growth impaired at 42 degrees Celsius (PubMed:30760776). Double dnaD temperature-sensitive-rarA deletion strains grow less well at 39 degrees Celsius (PubMed:30954900). No changes in sensitivity to DNA damaging agents methyl methanesulfonate (MMS) or 4-nitroquinolone-1-oxide (4NQO) (PubMed:30954900). Double rarA-recA deletion mutants are much less viable than recA deletion strains and slightly more sensitive to H(2)O(2), MMS and 4NQO than single recA mutants (PubMed:30954900, PubMed:32117122). The rarA deletion partially suppresses polY1 or polY2 (dinB1 and dinB2) translesion polymerase synthesis defects (PubMed:30954900). Double deletion strains with RecA mediators/modulators (recF or recO) have reduced growth compared to either single deletion and do not induce RecA expression during DNA damage (PubMed:32117122).</text>
</comment>
<comment type="similarity">
    <text evidence="9">Belongs to the AAA ATPase family. RarA/MGS1/WRNIP1 subfamily.</text>
</comment>
<proteinExistence type="evidence at protein level"/>
<dbReference type="EC" id="3.6.4.-" evidence="4"/>
<dbReference type="EMBL" id="AL009126">
    <property type="protein sequence ID" value="CAB14695.1"/>
    <property type="molecule type" value="Genomic_DNA"/>
</dbReference>
<dbReference type="PIR" id="D69981">
    <property type="entry name" value="D69981"/>
</dbReference>
<dbReference type="RefSeq" id="NP_390631.1">
    <property type="nucleotide sequence ID" value="NC_000964.3"/>
</dbReference>
<dbReference type="RefSeq" id="WP_004398500.1">
    <property type="nucleotide sequence ID" value="NZ_OZ025638.1"/>
</dbReference>
<dbReference type="SMR" id="O34528"/>
<dbReference type="FunCoup" id="O34528">
    <property type="interactions" value="646"/>
</dbReference>
<dbReference type="STRING" id="224308.BSU27530"/>
<dbReference type="PaxDb" id="224308-BSU27530"/>
<dbReference type="EnsemblBacteria" id="CAB14695">
    <property type="protein sequence ID" value="CAB14695"/>
    <property type="gene ID" value="BSU_27530"/>
</dbReference>
<dbReference type="GeneID" id="937545"/>
<dbReference type="KEGG" id="bsu:BSU27530"/>
<dbReference type="PATRIC" id="fig|224308.179.peg.2991"/>
<dbReference type="eggNOG" id="COG2256">
    <property type="taxonomic scope" value="Bacteria"/>
</dbReference>
<dbReference type="InParanoid" id="O34528"/>
<dbReference type="OrthoDB" id="9778364at2"/>
<dbReference type="PhylomeDB" id="O34528"/>
<dbReference type="BioCyc" id="BSUB:BSU27530-MONOMER"/>
<dbReference type="Proteomes" id="UP000001570">
    <property type="component" value="Chromosome"/>
</dbReference>
<dbReference type="GO" id="GO:0009295">
    <property type="term" value="C:nucleoid"/>
    <property type="evidence" value="ECO:0007669"/>
    <property type="project" value="UniProtKB-SubCell"/>
</dbReference>
<dbReference type="GO" id="GO:0005524">
    <property type="term" value="F:ATP binding"/>
    <property type="evidence" value="ECO:0007669"/>
    <property type="project" value="UniProtKB-KW"/>
</dbReference>
<dbReference type="GO" id="GO:0016887">
    <property type="term" value="F:ATP hydrolysis activity"/>
    <property type="evidence" value="ECO:0007669"/>
    <property type="project" value="InterPro"/>
</dbReference>
<dbReference type="GO" id="GO:0003677">
    <property type="term" value="F:DNA binding"/>
    <property type="evidence" value="ECO:0007669"/>
    <property type="project" value="InterPro"/>
</dbReference>
<dbReference type="GO" id="GO:0008047">
    <property type="term" value="F:enzyme activator activity"/>
    <property type="evidence" value="ECO:0000318"/>
    <property type="project" value="GO_Central"/>
</dbReference>
<dbReference type="GO" id="GO:0009378">
    <property type="term" value="F:four-way junction helicase activity"/>
    <property type="evidence" value="ECO:0007669"/>
    <property type="project" value="InterPro"/>
</dbReference>
<dbReference type="GO" id="GO:0017116">
    <property type="term" value="F:single-stranded DNA helicase activity"/>
    <property type="evidence" value="ECO:0000318"/>
    <property type="project" value="GO_Central"/>
</dbReference>
<dbReference type="GO" id="GO:0006310">
    <property type="term" value="P:DNA recombination"/>
    <property type="evidence" value="ECO:0007669"/>
    <property type="project" value="InterPro"/>
</dbReference>
<dbReference type="GO" id="GO:0000731">
    <property type="term" value="P:DNA synthesis involved in DNA repair"/>
    <property type="evidence" value="ECO:0000318"/>
    <property type="project" value="GO_Central"/>
</dbReference>
<dbReference type="GO" id="GO:0006261">
    <property type="term" value="P:DNA-templated DNA replication"/>
    <property type="evidence" value="ECO:0000318"/>
    <property type="project" value="GO_Central"/>
</dbReference>
<dbReference type="CDD" id="cd00009">
    <property type="entry name" value="AAA"/>
    <property type="match status" value="1"/>
</dbReference>
<dbReference type="CDD" id="cd18139">
    <property type="entry name" value="HLD_clamp_RarA"/>
    <property type="match status" value="1"/>
</dbReference>
<dbReference type="FunFam" id="1.10.3710.10:FF:000003">
    <property type="entry name" value="ATPase, AAA family protein"/>
    <property type="match status" value="1"/>
</dbReference>
<dbReference type="FunFam" id="1.20.272.10:FF:000001">
    <property type="entry name" value="Putative AAA family ATPase"/>
    <property type="match status" value="1"/>
</dbReference>
<dbReference type="FunFam" id="3.40.50.300:FF:000766">
    <property type="entry name" value="Recombination factor protein RarA"/>
    <property type="match status" value="1"/>
</dbReference>
<dbReference type="FunFam" id="1.10.8.60:FF:000029">
    <property type="entry name" value="Replication-associated recombination protein A"/>
    <property type="match status" value="1"/>
</dbReference>
<dbReference type="Gene3D" id="1.10.8.60">
    <property type="match status" value="1"/>
</dbReference>
<dbReference type="Gene3D" id="1.20.272.10">
    <property type="match status" value="1"/>
</dbReference>
<dbReference type="Gene3D" id="1.10.3710.10">
    <property type="entry name" value="DNA polymerase III clamp loader subunits, C-terminal domain"/>
    <property type="match status" value="1"/>
</dbReference>
<dbReference type="Gene3D" id="3.40.50.300">
    <property type="entry name" value="P-loop containing nucleotide triphosphate hydrolases"/>
    <property type="match status" value="1"/>
</dbReference>
<dbReference type="InterPro" id="IPR003593">
    <property type="entry name" value="AAA+_ATPase"/>
</dbReference>
<dbReference type="InterPro" id="IPR032423">
    <property type="entry name" value="AAA_assoc_2"/>
</dbReference>
<dbReference type="InterPro" id="IPR051314">
    <property type="entry name" value="AAA_ATPase_RarA/MGS1/WRNIP1"/>
</dbReference>
<dbReference type="InterPro" id="IPR008921">
    <property type="entry name" value="DNA_pol3_clamp-load_cplx_C"/>
</dbReference>
<dbReference type="InterPro" id="IPR021886">
    <property type="entry name" value="MgsA_C"/>
</dbReference>
<dbReference type="InterPro" id="IPR027417">
    <property type="entry name" value="P-loop_NTPase"/>
</dbReference>
<dbReference type="InterPro" id="IPR008824">
    <property type="entry name" value="RuvB-like_N"/>
</dbReference>
<dbReference type="PANTHER" id="PTHR13779:SF7">
    <property type="entry name" value="ATPASE WRNIP1"/>
    <property type="match status" value="1"/>
</dbReference>
<dbReference type="PANTHER" id="PTHR13779">
    <property type="entry name" value="WERNER HELICASE-INTERACTING PROTEIN 1 FAMILY MEMBER"/>
    <property type="match status" value="1"/>
</dbReference>
<dbReference type="Pfam" id="PF16193">
    <property type="entry name" value="AAA_assoc_2"/>
    <property type="match status" value="1"/>
</dbReference>
<dbReference type="Pfam" id="PF12002">
    <property type="entry name" value="MgsA_C"/>
    <property type="match status" value="1"/>
</dbReference>
<dbReference type="Pfam" id="PF05496">
    <property type="entry name" value="RuvB_N"/>
    <property type="match status" value="1"/>
</dbReference>
<dbReference type="SMART" id="SM00382">
    <property type="entry name" value="AAA"/>
    <property type="match status" value="1"/>
</dbReference>
<dbReference type="SUPFAM" id="SSF52540">
    <property type="entry name" value="P-loop containing nucleoside triphosphate hydrolases"/>
    <property type="match status" value="1"/>
</dbReference>
<dbReference type="SUPFAM" id="SSF48019">
    <property type="entry name" value="post-AAA+ oligomerization domain-like"/>
    <property type="match status" value="1"/>
</dbReference>
<sequence>MKPLAYRMRPTKIEDIIGQQHLVAEDKIIGRMVQAKHLSSMILYGPPGIGKTSIATAIAGSTSIAFRKLNAVINNKKDMEIVAQEAKMSGQVILILDEVHRLDKGKQDFLLPYLENGMIILIGATTANPYHAINPAIRSRTQIFELEPLTPELIKQALERALHDEHRGLGTYSVSIDDQAMEHFAHGCGGDVRSALNALELAVLSTKESADGEIHITLETAEECLQKKSFSHDKDGDAHYDVLSAFQKSIRGSDANAALHYLARLIEAGDLESIARRLLVIAYEDIGLASPQAGPRVLNAIQTAERVGFPEARIPLANAVIELCLSPKSNSAILAIDEALADIRAGKIGDVPKHLKDAHYKGAQELGRGIDYKYPHNYDNGWVEQQYLPDPLKNKQYYKPKQTGKFESALKQVYDKLMKRK</sequence>
<reference key="1">
    <citation type="journal article" date="1997" name="Nature">
        <title>The complete genome sequence of the Gram-positive bacterium Bacillus subtilis.</title>
        <authorList>
            <person name="Kunst F."/>
            <person name="Ogasawara N."/>
            <person name="Moszer I."/>
            <person name="Albertini A.M."/>
            <person name="Alloni G."/>
            <person name="Azevedo V."/>
            <person name="Bertero M.G."/>
            <person name="Bessieres P."/>
            <person name="Bolotin A."/>
            <person name="Borchert S."/>
            <person name="Borriss R."/>
            <person name="Boursier L."/>
            <person name="Brans A."/>
            <person name="Braun M."/>
            <person name="Brignell S.C."/>
            <person name="Bron S."/>
            <person name="Brouillet S."/>
            <person name="Bruschi C.V."/>
            <person name="Caldwell B."/>
            <person name="Capuano V."/>
            <person name="Carter N.M."/>
            <person name="Choi S.-K."/>
            <person name="Codani J.-J."/>
            <person name="Connerton I.F."/>
            <person name="Cummings N.J."/>
            <person name="Daniel R.A."/>
            <person name="Denizot F."/>
            <person name="Devine K.M."/>
            <person name="Duesterhoeft A."/>
            <person name="Ehrlich S.D."/>
            <person name="Emmerson P.T."/>
            <person name="Entian K.-D."/>
            <person name="Errington J."/>
            <person name="Fabret C."/>
            <person name="Ferrari E."/>
            <person name="Foulger D."/>
            <person name="Fritz C."/>
            <person name="Fujita M."/>
            <person name="Fujita Y."/>
            <person name="Fuma S."/>
            <person name="Galizzi A."/>
            <person name="Galleron N."/>
            <person name="Ghim S.-Y."/>
            <person name="Glaser P."/>
            <person name="Goffeau A."/>
            <person name="Golightly E.J."/>
            <person name="Grandi G."/>
            <person name="Guiseppi G."/>
            <person name="Guy B.J."/>
            <person name="Haga K."/>
            <person name="Haiech J."/>
            <person name="Harwood C.R."/>
            <person name="Henaut A."/>
            <person name="Hilbert H."/>
            <person name="Holsappel S."/>
            <person name="Hosono S."/>
            <person name="Hullo M.-F."/>
            <person name="Itaya M."/>
            <person name="Jones L.-M."/>
            <person name="Joris B."/>
            <person name="Karamata D."/>
            <person name="Kasahara Y."/>
            <person name="Klaerr-Blanchard M."/>
            <person name="Klein C."/>
            <person name="Kobayashi Y."/>
            <person name="Koetter P."/>
            <person name="Koningstein G."/>
            <person name="Krogh S."/>
            <person name="Kumano M."/>
            <person name="Kurita K."/>
            <person name="Lapidus A."/>
            <person name="Lardinois S."/>
            <person name="Lauber J."/>
            <person name="Lazarevic V."/>
            <person name="Lee S.-M."/>
            <person name="Levine A."/>
            <person name="Liu H."/>
            <person name="Masuda S."/>
            <person name="Mauel C."/>
            <person name="Medigue C."/>
            <person name="Medina N."/>
            <person name="Mellado R.P."/>
            <person name="Mizuno M."/>
            <person name="Moestl D."/>
            <person name="Nakai S."/>
            <person name="Noback M."/>
            <person name="Noone D."/>
            <person name="O'Reilly M."/>
            <person name="Ogawa K."/>
            <person name="Ogiwara A."/>
            <person name="Oudega B."/>
            <person name="Park S.-H."/>
            <person name="Parro V."/>
            <person name="Pohl T.M."/>
            <person name="Portetelle D."/>
            <person name="Porwollik S."/>
            <person name="Prescott A.M."/>
            <person name="Presecan E."/>
            <person name="Pujic P."/>
            <person name="Purnelle B."/>
            <person name="Rapoport G."/>
            <person name="Rey M."/>
            <person name="Reynolds S."/>
            <person name="Rieger M."/>
            <person name="Rivolta C."/>
            <person name="Rocha E."/>
            <person name="Roche B."/>
            <person name="Rose M."/>
            <person name="Sadaie Y."/>
            <person name="Sato T."/>
            <person name="Scanlan E."/>
            <person name="Schleich S."/>
            <person name="Schroeter R."/>
            <person name="Scoffone F."/>
            <person name="Sekiguchi J."/>
            <person name="Sekowska A."/>
            <person name="Seror S.J."/>
            <person name="Serror P."/>
            <person name="Shin B.-S."/>
            <person name="Soldo B."/>
            <person name="Sorokin A."/>
            <person name="Tacconi E."/>
            <person name="Takagi T."/>
            <person name="Takahashi H."/>
            <person name="Takemaru K."/>
            <person name="Takeuchi M."/>
            <person name="Tamakoshi A."/>
            <person name="Tanaka T."/>
            <person name="Terpstra P."/>
            <person name="Tognoni A."/>
            <person name="Tosato V."/>
            <person name="Uchiyama S."/>
            <person name="Vandenbol M."/>
            <person name="Vannier F."/>
            <person name="Vassarotti A."/>
            <person name="Viari A."/>
            <person name="Wambutt R."/>
            <person name="Wedler E."/>
            <person name="Wedler H."/>
            <person name="Weitzenegger T."/>
            <person name="Winters P."/>
            <person name="Wipat A."/>
            <person name="Yamamoto H."/>
            <person name="Yamane K."/>
            <person name="Yasumoto K."/>
            <person name="Yata K."/>
            <person name="Yoshida K."/>
            <person name="Yoshikawa H.-F."/>
            <person name="Zumstein E."/>
            <person name="Yoshikawa H."/>
            <person name="Danchin A."/>
        </authorList>
    </citation>
    <scope>NUCLEOTIDE SEQUENCE [LARGE SCALE GENOMIC DNA]</scope>
    <source>
        <strain>168</strain>
    </source>
</reference>
<reference key="2">
    <citation type="journal article" date="2010" name="PLoS Genet.">
        <title>The C-terminal domain of the bacterial SSB protein acts as a DNA maintenance hub at active chromosome replication forks.</title>
        <authorList>
            <person name="Costes A."/>
            <person name="Lecointe F."/>
            <person name="McGovern S."/>
            <person name="Quevillon-Cheruel S."/>
            <person name="Polard P."/>
        </authorList>
    </citation>
    <scope>INTERACTION WITH SSB</scope>
    <scope>SUBCELLULAR LOCATION</scope>
    <source>
        <strain>168</strain>
    </source>
</reference>
<reference key="3">
    <citation type="journal article" date="2018" name="Nucleic Acids Res.">
        <title>Bacillus subtilis RarA modulates replication restart.</title>
        <authorList>
            <person name="Carrasco B."/>
            <person name="Seco E.M."/>
            <person name="Lopez-Sanz M."/>
            <person name="Alonso J.C."/>
            <person name="Ayora S."/>
        </authorList>
    </citation>
    <scope>FUNCTION AS AN ATPASE</scope>
    <scope>CATALYTIC ACTIVITY</scope>
    <scope>ACTIVITY REGULATION</scope>
    <scope>SUBUNIT</scope>
    <scope>DNA-BINDING</scope>
    <scope>MUTAGENESIS OF LYS-51</scope>
</reference>
<reference key="4">
    <citation type="journal article" date="2019" name="Sci. Rep.">
        <title>Single molecule tracking reveals functions for RarA at replication forks but also independently from replication during DNA repair in Bacillus subtilis.</title>
        <authorList>
            <person name="Romero H."/>
            <person name="Roesch T.C."/>
            <person name="Hernandez-Tamayo R."/>
            <person name="Lucena D."/>
            <person name="Ayora S."/>
            <person name="Alonso J.C."/>
            <person name="Graumann P.L."/>
        </authorList>
    </citation>
    <scope>FUNCTION</scope>
    <scope>SUBCELLULAR LOCATION</scope>
    <scope>DISRUPTION PHENOTYPE</scope>
    <source>
        <strain>168 / YB886 / BG214</strain>
    </source>
</reference>
<reference key="5">
    <citation type="journal article" date="2019" name="DNA Repair">
        <title>Bacillus subtilis RarA acts at the interplay between replication and repair-by-recombination.</title>
        <authorList>
            <person name="Romero H."/>
            <person name="Torres R."/>
            <person name="Hernandez-Tamayo R."/>
            <person name="Carrasco B."/>
            <person name="Ayora S."/>
            <person name="Graumann P.L."/>
            <person name="Alonso J.C."/>
        </authorList>
    </citation>
    <scope>FUNCTION</scope>
    <scope>GENETIC INTERACTION</scope>
    <scope>DISRUPTION PHENOTYPE</scope>
    <source>
        <strain>168 / YB886 / BG214</strain>
    </source>
</reference>
<reference key="6">
    <citation type="journal article" date="2020" name="Front. Microbiol.">
        <title>Bacillus subtilis RarA Acts as a Positive RecA Accessory Protein.</title>
        <authorList>
            <person name="Romero H."/>
            <person name="Serrano E."/>
            <person name="Hernandez-Tamayo R."/>
            <person name="Carrasco B."/>
            <person name="Cardenas P.P."/>
            <person name="Ayora S."/>
            <person name="Graumann P.L."/>
            <person name="Alonso J.C."/>
        </authorList>
    </citation>
    <scope>FUNCTION</scope>
    <scope>GENETIC INTERACTION</scope>
    <scope>DISRUPTION PHENOTYPE</scope>
    <scope>MUTAGENESIS OF LYS-51</scope>
    <source>
        <strain>168 / YB886 / BG214</strain>
    </source>
</reference>
<organism>
    <name type="scientific">Bacillus subtilis (strain 168)</name>
    <dbReference type="NCBI Taxonomy" id="224308"/>
    <lineage>
        <taxon>Bacteria</taxon>
        <taxon>Bacillati</taxon>
        <taxon>Bacillota</taxon>
        <taxon>Bacilli</taxon>
        <taxon>Bacillales</taxon>
        <taxon>Bacillaceae</taxon>
        <taxon>Bacillus</taxon>
    </lineage>
</organism>
<accession>O34528</accession>
<feature type="chain" id="PRO_0000360859" description="Replication-associated recombination protein A">
    <location>
        <begin position="1"/>
        <end position="421"/>
    </location>
</feature>
<feature type="binding site" evidence="2">
    <location>
        <begin position="45"/>
        <end position="52"/>
    </location>
    <ligand>
        <name>ATP</name>
        <dbReference type="ChEBI" id="CHEBI:30616"/>
    </ligand>
</feature>
<feature type="mutagenesis site" description="Does not bind or hydrolyze ATP, binds SsbA, binds ssDNA with reduced affinity. Probably cannot load RecA onto SsbA-coated ssDNA." evidence="4 7">
    <original>K</original>
    <variation>A</variation>
    <location>
        <position position="51"/>
    </location>
</feature>
<gene>
    <name evidence="8" type="primary">rarA</name>
    <name type="synonym">yrvN</name>
    <name type="ordered locus">BSU27530</name>
</gene>
<name>RARA_BACSU</name>